<accession>B7N9N0</accession>
<evidence type="ECO:0000255" key="1">
    <source>
        <dbReference type="HAMAP-Rule" id="MF_00454"/>
    </source>
</evidence>
<name>FLUC_ECOLU</name>
<organism>
    <name type="scientific">Escherichia coli O17:K52:H18 (strain UMN026 / ExPEC)</name>
    <dbReference type="NCBI Taxonomy" id="585056"/>
    <lineage>
        <taxon>Bacteria</taxon>
        <taxon>Pseudomonadati</taxon>
        <taxon>Pseudomonadota</taxon>
        <taxon>Gammaproteobacteria</taxon>
        <taxon>Enterobacterales</taxon>
        <taxon>Enterobacteriaceae</taxon>
        <taxon>Escherichia</taxon>
    </lineage>
</organism>
<gene>
    <name evidence="1" type="primary">fluC</name>
    <name evidence="1" type="synonym">crcB</name>
    <name type="ordered locus">ECUMN_0717</name>
</gene>
<proteinExistence type="inferred from homology"/>
<sequence>MLQLLLAVFIGGGTGSVARWLLSMRFNPLHQAIPLGTLAANLIGAFIIGMGFAWFSRMTNIDPVWKVLITTGFCGGLTTFSTFSAEVVFLLQEGRLGWALLNVFVNLLGSFAMTALAFWLFSASTAH</sequence>
<keyword id="KW-0997">Cell inner membrane</keyword>
<keyword id="KW-1003">Cell membrane</keyword>
<keyword id="KW-0407">Ion channel</keyword>
<keyword id="KW-0406">Ion transport</keyword>
<keyword id="KW-0472">Membrane</keyword>
<keyword id="KW-0479">Metal-binding</keyword>
<keyword id="KW-0915">Sodium</keyword>
<keyword id="KW-0812">Transmembrane</keyword>
<keyword id="KW-1133">Transmembrane helix</keyword>
<keyword id="KW-0813">Transport</keyword>
<comment type="function">
    <text evidence="1">Fluoride-specific ion channel. Important for reducing fluoride concentration in the cell, thus reducing its toxicity.</text>
</comment>
<comment type="catalytic activity">
    <reaction evidence="1">
        <text>fluoride(in) = fluoride(out)</text>
        <dbReference type="Rhea" id="RHEA:76159"/>
        <dbReference type="ChEBI" id="CHEBI:17051"/>
    </reaction>
    <physiologicalReaction direction="left-to-right" evidence="1">
        <dbReference type="Rhea" id="RHEA:76160"/>
    </physiologicalReaction>
</comment>
<comment type="activity regulation">
    <text evidence="1">Na(+) is not transported, but it plays an essential structural role and its presence is essential for fluoride channel function.</text>
</comment>
<comment type="subcellular location">
    <subcellularLocation>
        <location evidence="1">Cell inner membrane</location>
        <topology evidence="1">Multi-pass membrane protein</topology>
    </subcellularLocation>
</comment>
<comment type="similarity">
    <text evidence="1">Belongs to the fluoride channel Fluc/FEX (TC 1.A.43) family.</text>
</comment>
<feature type="chain" id="PRO_1000125125" description="Fluoride-specific ion channel FluC">
    <location>
        <begin position="1"/>
        <end position="127"/>
    </location>
</feature>
<feature type="transmembrane region" description="Helical" evidence="1">
    <location>
        <begin position="4"/>
        <end position="24"/>
    </location>
</feature>
<feature type="transmembrane region" description="Helical" evidence="1">
    <location>
        <begin position="35"/>
        <end position="55"/>
    </location>
</feature>
<feature type="transmembrane region" description="Helical" evidence="1">
    <location>
        <begin position="71"/>
        <end position="91"/>
    </location>
</feature>
<feature type="transmembrane region" description="Helical" evidence="1">
    <location>
        <begin position="103"/>
        <end position="123"/>
    </location>
</feature>
<feature type="binding site" evidence="1">
    <location>
        <position position="75"/>
    </location>
    <ligand>
        <name>Na(+)</name>
        <dbReference type="ChEBI" id="CHEBI:29101"/>
        <note>structural</note>
    </ligand>
</feature>
<feature type="binding site" evidence="1">
    <location>
        <position position="78"/>
    </location>
    <ligand>
        <name>Na(+)</name>
        <dbReference type="ChEBI" id="CHEBI:29101"/>
        <note>structural</note>
    </ligand>
</feature>
<dbReference type="EMBL" id="CU928163">
    <property type="protein sequence ID" value="CAR11931.1"/>
    <property type="molecule type" value="Genomic_DNA"/>
</dbReference>
<dbReference type="RefSeq" id="WP_000939743.1">
    <property type="nucleotide sequence ID" value="NC_011751.1"/>
</dbReference>
<dbReference type="RefSeq" id="YP_002411477.1">
    <property type="nucleotide sequence ID" value="NC_011751.1"/>
</dbReference>
<dbReference type="SMR" id="B7N9N0"/>
<dbReference type="STRING" id="585056.ECUMN_0717"/>
<dbReference type="KEGG" id="eum:ECUMN_0717"/>
<dbReference type="PATRIC" id="fig|585056.7.peg.915"/>
<dbReference type="HOGENOM" id="CLU_114342_3_3_6"/>
<dbReference type="Proteomes" id="UP000007097">
    <property type="component" value="Chromosome"/>
</dbReference>
<dbReference type="GO" id="GO:0005886">
    <property type="term" value="C:plasma membrane"/>
    <property type="evidence" value="ECO:0007669"/>
    <property type="project" value="UniProtKB-SubCell"/>
</dbReference>
<dbReference type="GO" id="GO:0062054">
    <property type="term" value="F:fluoride channel activity"/>
    <property type="evidence" value="ECO:0007669"/>
    <property type="project" value="UniProtKB-UniRule"/>
</dbReference>
<dbReference type="GO" id="GO:0046872">
    <property type="term" value="F:metal ion binding"/>
    <property type="evidence" value="ECO:0007669"/>
    <property type="project" value="UniProtKB-KW"/>
</dbReference>
<dbReference type="GO" id="GO:0140114">
    <property type="term" value="P:cellular detoxification of fluoride"/>
    <property type="evidence" value="ECO:0007669"/>
    <property type="project" value="UniProtKB-UniRule"/>
</dbReference>
<dbReference type="HAMAP" id="MF_00454">
    <property type="entry name" value="FluC"/>
    <property type="match status" value="1"/>
</dbReference>
<dbReference type="InterPro" id="IPR003691">
    <property type="entry name" value="FluC"/>
</dbReference>
<dbReference type="NCBIfam" id="TIGR00494">
    <property type="entry name" value="crcB"/>
    <property type="match status" value="1"/>
</dbReference>
<dbReference type="NCBIfam" id="NF010792">
    <property type="entry name" value="PRK14196.1"/>
    <property type="match status" value="1"/>
</dbReference>
<dbReference type="PANTHER" id="PTHR28259">
    <property type="entry name" value="FLUORIDE EXPORT PROTEIN 1-RELATED"/>
    <property type="match status" value="1"/>
</dbReference>
<dbReference type="PANTHER" id="PTHR28259:SF1">
    <property type="entry name" value="FLUORIDE EXPORT PROTEIN 1-RELATED"/>
    <property type="match status" value="1"/>
</dbReference>
<dbReference type="Pfam" id="PF02537">
    <property type="entry name" value="CRCB"/>
    <property type="match status" value="1"/>
</dbReference>
<reference key="1">
    <citation type="journal article" date="2009" name="PLoS Genet.">
        <title>Organised genome dynamics in the Escherichia coli species results in highly diverse adaptive paths.</title>
        <authorList>
            <person name="Touchon M."/>
            <person name="Hoede C."/>
            <person name="Tenaillon O."/>
            <person name="Barbe V."/>
            <person name="Baeriswyl S."/>
            <person name="Bidet P."/>
            <person name="Bingen E."/>
            <person name="Bonacorsi S."/>
            <person name="Bouchier C."/>
            <person name="Bouvet O."/>
            <person name="Calteau A."/>
            <person name="Chiapello H."/>
            <person name="Clermont O."/>
            <person name="Cruveiller S."/>
            <person name="Danchin A."/>
            <person name="Diard M."/>
            <person name="Dossat C."/>
            <person name="Karoui M.E."/>
            <person name="Frapy E."/>
            <person name="Garry L."/>
            <person name="Ghigo J.M."/>
            <person name="Gilles A.M."/>
            <person name="Johnson J."/>
            <person name="Le Bouguenec C."/>
            <person name="Lescat M."/>
            <person name="Mangenot S."/>
            <person name="Martinez-Jehanne V."/>
            <person name="Matic I."/>
            <person name="Nassif X."/>
            <person name="Oztas S."/>
            <person name="Petit M.A."/>
            <person name="Pichon C."/>
            <person name="Rouy Z."/>
            <person name="Ruf C.S."/>
            <person name="Schneider D."/>
            <person name="Tourret J."/>
            <person name="Vacherie B."/>
            <person name="Vallenet D."/>
            <person name="Medigue C."/>
            <person name="Rocha E.P.C."/>
            <person name="Denamur E."/>
        </authorList>
    </citation>
    <scope>NUCLEOTIDE SEQUENCE [LARGE SCALE GENOMIC DNA]</scope>
    <source>
        <strain>UMN026 / ExPEC</strain>
    </source>
</reference>
<protein>
    <recommendedName>
        <fullName evidence="1">Fluoride-specific ion channel FluC</fullName>
    </recommendedName>
</protein>